<comment type="function">
    <text evidence="1">Cell division protein that is part of the divisome complex and is recruited early to the Z-ring. Probably stimulates Z-ring formation, perhaps through the cross-linking of FtsZ protofilaments. Its function overlaps with FtsA.</text>
</comment>
<comment type="subunit">
    <text evidence="1">Homodimer. Interacts with FtsZ.</text>
</comment>
<comment type="subcellular location">
    <subcellularLocation>
        <location evidence="1">Cytoplasm</location>
    </subcellularLocation>
    <text evidence="1">Localizes to the division site, in a FtsZ-dependent manner.</text>
</comment>
<comment type="similarity">
    <text evidence="1">Belongs to the SepF family.</text>
</comment>
<name>SEPF_SYNSC</name>
<sequence length="188" mass="19862">MSLISRLRAVVAGDDYLDGELDDFAYDDEQDDQDQRALQADGGALATIGDSNPFDLGGDLPGSNVIGMPGISNAAAEVNVMEPRSFDEMPRAIQALRERKTVILNLTMMEPDQAQRAVDFVAGGTFAIDGHQERVGESIFLFAPSCVTVTNTGHDEASAPTVVSREADAADVDEYASAPSPAWGAAAL</sequence>
<organism>
    <name type="scientific">Synechococcus sp. (strain CC9605)</name>
    <dbReference type="NCBI Taxonomy" id="110662"/>
    <lineage>
        <taxon>Bacteria</taxon>
        <taxon>Bacillati</taxon>
        <taxon>Cyanobacteriota</taxon>
        <taxon>Cyanophyceae</taxon>
        <taxon>Synechococcales</taxon>
        <taxon>Synechococcaceae</taxon>
        <taxon>Synechococcus</taxon>
    </lineage>
</organism>
<dbReference type="EMBL" id="CP000110">
    <property type="protein sequence ID" value="ABB35765.1"/>
    <property type="molecule type" value="Genomic_DNA"/>
</dbReference>
<dbReference type="RefSeq" id="WP_011364973.1">
    <property type="nucleotide sequence ID" value="NC_007516.1"/>
</dbReference>
<dbReference type="SMR" id="Q3AI17"/>
<dbReference type="STRING" id="110662.Syncc9605_2024"/>
<dbReference type="KEGG" id="syd:Syncc9605_2024"/>
<dbReference type="eggNOG" id="COG1799">
    <property type="taxonomic scope" value="Bacteria"/>
</dbReference>
<dbReference type="HOGENOM" id="CLU_078499_1_0_3"/>
<dbReference type="OrthoDB" id="9815206at2"/>
<dbReference type="GO" id="GO:0005737">
    <property type="term" value="C:cytoplasm"/>
    <property type="evidence" value="ECO:0007669"/>
    <property type="project" value="UniProtKB-SubCell"/>
</dbReference>
<dbReference type="GO" id="GO:0000917">
    <property type="term" value="P:division septum assembly"/>
    <property type="evidence" value="ECO:0007669"/>
    <property type="project" value="UniProtKB-KW"/>
</dbReference>
<dbReference type="GO" id="GO:0043093">
    <property type="term" value="P:FtsZ-dependent cytokinesis"/>
    <property type="evidence" value="ECO:0007669"/>
    <property type="project" value="UniProtKB-UniRule"/>
</dbReference>
<dbReference type="Gene3D" id="3.30.110.150">
    <property type="entry name" value="SepF-like protein"/>
    <property type="match status" value="1"/>
</dbReference>
<dbReference type="HAMAP" id="MF_01197">
    <property type="entry name" value="SepF"/>
    <property type="match status" value="1"/>
</dbReference>
<dbReference type="InterPro" id="IPR023052">
    <property type="entry name" value="Cell_div_SepF"/>
</dbReference>
<dbReference type="InterPro" id="IPR007561">
    <property type="entry name" value="Cell_div_SepF/SepF-rel"/>
</dbReference>
<dbReference type="InterPro" id="IPR038594">
    <property type="entry name" value="SepF-like_sf"/>
</dbReference>
<dbReference type="PANTHER" id="PTHR35798">
    <property type="entry name" value="CELL DIVISION PROTEIN SEPF"/>
    <property type="match status" value="1"/>
</dbReference>
<dbReference type="PANTHER" id="PTHR35798:SF1">
    <property type="entry name" value="CELL DIVISION PROTEIN SEPF"/>
    <property type="match status" value="1"/>
</dbReference>
<dbReference type="Pfam" id="PF04472">
    <property type="entry name" value="SepF"/>
    <property type="match status" value="1"/>
</dbReference>
<keyword id="KW-0131">Cell cycle</keyword>
<keyword id="KW-0132">Cell division</keyword>
<keyword id="KW-0963">Cytoplasm</keyword>
<keyword id="KW-0717">Septation</keyword>
<reference key="1">
    <citation type="submission" date="2005-07" db="EMBL/GenBank/DDBJ databases">
        <title>Complete sequence of Synechococcus sp. CC9605.</title>
        <authorList>
            <consortium name="US DOE Joint Genome Institute"/>
            <person name="Copeland A."/>
            <person name="Lucas S."/>
            <person name="Lapidus A."/>
            <person name="Barry K."/>
            <person name="Detter J.C."/>
            <person name="Glavina T."/>
            <person name="Hammon N."/>
            <person name="Israni S."/>
            <person name="Pitluck S."/>
            <person name="Schmutz J."/>
            <person name="Martinez M."/>
            <person name="Larimer F."/>
            <person name="Land M."/>
            <person name="Kyrpides N."/>
            <person name="Ivanova N."/>
            <person name="Richardson P."/>
        </authorList>
    </citation>
    <scope>NUCLEOTIDE SEQUENCE [LARGE SCALE GENOMIC DNA]</scope>
    <source>
        <strain>CC9605</strain>
    </source>
</reference>
<feature type="chain" id="PRO_0000334124" description="Cell division protein SepF">
    <location>
        <begin position="1"/>
        <end position="188"/>
    </location>
</feature>
<accession>Q3AI17</accession>
<evidence type="ECO:0000255" key="1">
    <source>
        <dbReference type="HAMAP-Rule" id="MF_01197"/>
    </source>
</evidence>
<proteinExistence type="inferred from homology"/>
<gene>
    <name evidence="1" type="primary">sepF</name>
    <name type="ordered locus">Syncc9605_2024</name>
</gene>
<protein>
    <recommendedName>
        <fullName evidence="1">Cell division protein SepF</fullName>
    </recommendedName>
</protein>